<gene>
    <name evidence="1" type="primary">thyA</name>
    <name type="ordered locus">ESA_00482</name>
</gene>
<sequence>MKQYLELMNKVLHEGAQKDDRTGTGTLSIFGHQMRFNLQEGFPLVTTKRCHLRSIIHELLWFLKGDTNVAYLHENNVTIWDEWADENGDLGPVYGKQWRSWATPDGRHIDQLETVLNQLKNDPDSRRIIVSAWNVGELDKMALAPCHAFFQFYVANGKLSCQLYQRSCDVFLGLPFNIASYALLVHMMAQQCDLEPGDFVWTGGDTHLYSNHLEQARLQLTREPRPLPKLVIKRKPESLFDYRFEDFEIEGYDPHPAIKAPVAI</sequence>
<keyword id="KW-0963">Cytoplasm</keyword>
<keyword id="KW-0489">Methyltransferase</keyword>
<keyword id="KW-0545">Nucleotide biosynthesis</keyword>
<keyword id="KW-1185">Reference proteome</keyword>
<keyword id="KW-0808">Transferase</keyword>
<comment type="function">
    <text evidence="1">Catalyzes the reductive methylation of 2'-deoxyuridine-5'-monophosphate (dUMP) to 2'-deoxythymidine-5'-monophosphate (dTMP) while utilizing 5,10-methylenetetrahydrofolate (mTHF) as the methyl donor and reductant in the reaction, yielding dihydrofolate (DHF) as a by-product. This enzymatic reaction provides an intracellular de novo source of dTMP, an essential precursor for DNA biosynthesis.</text>
</comment>
<comment type="catalytic activity">
    <reaction evidence="1">
        <text>dUMP + (6R)-5,10-methylene-5,6,7,8-tetrahydrofolate = 7,8-dihydrofolate + dTMP</text>
        <dbReference type="Rhea" id="RHEA:12104"/>
        <dbReference type="ChEBI" id="CHEBI:15636"/>
        <dbReference type="ChEBI" id="CHEBI:57451"/>
        <dbReference type="ChEBI" id="CHEBI:63528"/>
        <dbReference type="ChEBI" id="CHEBI:246422"/>
        <dbReference type="EC" id="2.1.1.45"/>
    </reaction>
</comment>
<comment type="pathway">
    <text evidence="1">Pyrimidine metabolism; dTTP biosynthesis.</text>
</comment>
<comment type="subunit">
    <text evidence="1">Homodimer.</text>
</comment>
<comment type="subcellular location">
    <subcellularLocation>
        <location evidence="1">Cytoplasm</location>
    </subcellularLocation>
</comment>
<comment type="similarity">
    <text evidence="1">Belongs to the thymidylate synthase family. Bacterial-type ThyA subfamily.</text>
</comment>
<name>TYSY_CROS8</name>
<proteinExistence type="inferred from homology"/>
<protein>
    <recommendedName>
        <fullName evidence="1">Thymidylate synthase</fullName>
        <shortName evidence="1">TS</shortName>
        <shortName evidence="1">TSase</shortName>
        <ecNumber evidence="1">2.1.1.45</ecNumber>
    </recommendedName>
</protein>
<accession>A7MR31</accession>
<evidence type="ECO:0000255" key="1">
    <source>
        <dbReference type="HAMAP-Rule" id="MF_00008"/>
    </source>
</evidence>
<feature type="chain" id="PRO_1000000595" description="Thymidylate synthase">
    <location>
        <begin position="1"/>
        <end position="264"/>
    </location>
</feature>
<feature type="active site" description="Nucleophile" evidence="1">
    <location>
        <position position="146"/>
    </location>
</feature>
<feature type="binding site" description="in other chain" evidence="1">
    <location>
        <position position="21"/>
    </location>
    <ligand>
        <name>dUMP</name>
        <dbReference type="ChEBI" id="CHEBI:246422"/>
        <note>ligand shared between dimeric partners</note>
    </ligand>
</feature>
<feature type="binding site" evidence="1">
    <location>
        <position position="51"/>
    </location>
    <ligand>
        <name>(6R)-5,10-methylene-5,6,7,8-tetrahydrofolate</name>
        <dbReference type="ChEBI" id="CHEBI:15636"/>
    </ligand>
</feature>
<feature type="binding site" evidence="1">
    <location>
        <begin position="126"/>
        <end position="127"/>
    </location>
    <ligand>
        <name>dUMP</name>
        <dbReference type="ChEBI" id="CHEBI:246422"/>
        <note>ligand shared between dimeric partners</note>
    </ligand>
</feature>
<feature type="binding site" description="in other chain" evidence="1">
    <location>
        <begin position="166"/>
        <end position="169"/>
    </location>
    <ligand>
        <name>dUMP</name>
        <dbReference type="ChEBI" id="CHEBI:246422"/>
        <note>ligand shared between dimeric partners</note>
    </ligand>
</feature>
<feature type="binding site" evidence="1">
    <location>
        <position position="169"/>
    </location>
    <ligand>
        <name>(6R)-5,10-methylene-5,6,7,8-tetrahydrofolate</name>
        <dbReference type="ChEBI" id="CHEBI:15636"/>
    </ligand>
</feature>
<feature type="binding site" description="in other chain" evidence="1">
    <location>
        <position position="177"/>
    </location>
    <ligand>
        <name>dUMP</name>
        <dbReference type="ChEBI" id="CHEBI:246422"/>
        <note>ligand shared between dimeric partners</note>
    </ligand>
</feature>
<feature type="binding site" description="in other chain" evidence="1">
    <location>
        <begin position="207"/>
        <end position="209"/>
    </location>
    <ligand>
        <name>dUMP</name>
        <dbReference type="ChEBI" id="CHEBI:246422"/>
        <note>ligand shared between dimeric partners</note>
    </ligand>
</feature>
<feature type="binding site" evidence="1">
    <location>
        <position position="263"/>
    </location>
    <ligand>
        <name>(6R)-5,10-methylene-5,6,7,8-tetrahydrofolate</name>
        <dbReference type="ChEBI" id="CHEBI:15636"/>
    </ligand>
</feature>
<dbReference type="EC" id="2.1.1.45" evidence="1"/>
<dbReference type="EMBL" id="CP000783">
    <property type="protein sequence ID" value="ABU75777.1"/>
    <property type="molecule type" value="Genomic_DNA"/>
</dbReference>
<dbReference type="RefSeq" id="WP_012123890.1">
    <property type="nucleotide sequence ID" value="NC_009778.1"/>
</dbReference>
<dbReference type="SMR" id="A7MR31"/>
<dbReference type="KEGG" id="esa:ESA_00482"/>
<dbReference type="PATRIC" id="fig|290339.8.peg.437"/>
<dbReference type="HOGENOM" id="CLU_021669_0_0_6"/>
<dbReference type="UniPathway" id="UPA00575"/>
<dbReference type="Proteomes" id="UP000000260">
    <property type="component" value="Chromosome"/>
</dbReference>
<dbReference type="GO" id="GO:0005829">
    <property type="term" value="C:cytosol"/>
    <property type="evidence" value="ECO:0007669"/>
    <property type="project" value="TreeGrafter"/>
</dbReference>
<dbReference type="GO" id="GO:0004799">
    <property type="term" value="F:thymidylate synthase activity"/>
    <property type="evidence" value="ECO:0007669"/>
    <property type="project" value="UniProtKB-UniRule"/>
</dbReference>
<dbReference type="GO" id="GO:0006231">
    <property type="term" value="P:dTMP biosynthetic process"/>
    <property type="evidence" value="ECO:0007669"/>
    <property type="project" value="UniProtKB-UniRule"/>
</dbReference>
<dbReference type="GO" id="GO:0006235">
    <property type="term" value="P:dTTP biosynthetic process"/>
    <property type="evidence" value="ECO:0007669"/>
    <property type="project" value="UniProtKB-UniRule"/>
</dbReference>
<dbReference type="GO" id="GO:0032259">
    <property type="term" value="P:methylation"/>
    <property type="evidence" value="ECO:0007669"/>
    <property type="project" value="UniProtKB-KW"/>
</dbReference>
<dbReference type="CDD" id="cd00351">
    <property type="entry name" value="TS_Pyrimidine_HMase"/>
    <property type="match status" value="1"/>
</dbReference>
<dbReference type="FunFam" id="3.30.572.10:FF:000001">
    <property type="entry name" value="Thymidylate synthase"/>
    <property type="match status" value="1"/>
</dbReference>
<dbReference type="Gene3D" id="3.30.572.10">
    <property type="entry name" value="Thymidylate synthase/dCMP hydroxymethylase domain"/>
    <property type="match status" value="1"/>
</dbReference>
<dbReference type="HAMAP" id="MF_00008">
    <property type="entry name" value="Thymidy_synth_bact"/>
    <property type="match status" value="1"/>
</dbReference>
<dbReference type="InterPro" id="IPR045097">
    <property type="entry name" value="Thymidate_synth/dCMP_Mease"/>
</dbReference>
<dbReference type="InterPro" id="IPR023451">
    <property type="entry name" value="Thymidate_synth/dCMP_Mease_dom"/>
</dbReference>
<dbReference type="InterPro" id="IPR036926">
    <property type="entry name" value="Thymidate_synth/dCMP_Mease_sf"/>
</dbReference>
<dbReference type="InterPro" id="IPR000398">
    <property type="entry name" value="Thymidylate_synthase"/>
</dbReference>
<dbReference type="InterPro" id="IPR020940">
    <property type="entry name" value="Thymidylate_synthase_AS"/>
</dbReference>
<dbReference type="NCBIfam" id="NF002497">
    <property type="entry name" value="PRK01827.1-3"/>
    <property type="match status" value="1"/>
</dbReference>
<dbReference type="NCBIfam" id="NF002499">
    <property type="entry name" value="PRK01827.1-5"/>
    <property type="match status" value="1"/>
</dbReference>
<dbReference type="NCBIfam" id="TIGR03284">
    <property type="entry name" value="thym_sym"/>
    <property type="match status" value="2"/>
</dbReference>
<dbReference type="PANTHER" id="PTHR11548:SF9">
    <property type="entry name" value="THYMIDYLATE SYNTHASE"/>
    <property type="match status" value="1"/>
</dbReference>
<dbReference type="PANTHER" id="PTHR11548">
    <property type="entry name" value="THYMIDYLATE SYNTHASE 1"/>
    <property type="match status" value="1"/>
</dbReference>
<dbReference type="Pfam" id="PF00303">
    <property type="entry name" value="Thymidylat_synt"/>
    <property type="match status" value="1"/>
</dbReference>
<dbReference type="PRINTS" id="PR00108">
    <property type="entry name" value="THYMDSNTHASE"/>
</dbReference>
<dbReference type="SUPFAM" id="SSF55831">
    <property type="entry name" value="Thymidylate synthase/dCMP hydroxymethylase"/>
    <property type="match status" value="1"/>
</dbReference>
<dbReference type="PROSITE" id="PS00091">
    <property type="entry name" value="THYMIDYLATE_SYNTHASE"/>
    <property type="match status" value="1"/>
</dbReference>
<organism>
    <name type="scientific">Cronobacter sakazakii (strain ATCC BAA-894)</name>
    <name type="common">Enterobacter sakazakii</name>
    <dbReference type="NCBI Taxonomy" id="290339"/>
    <lineage>
        <taxon>Bacteria</taxon>
        <taxon>Pseudomonadati</taxon>
        <taxon>Pseudomonadota</taxon>
        <taxon>Gammaproteobacteria</taxon>
        <taxon>Enterobacterales</taxon>
        <taxon>Enterobacteriaceae</taxon>
        <taxon>Cronobacter</taxon>
    </lineage>
</organism>
<reference key="1">
    <citation type="journal article" date="2010" name="PLoS ONE">
        <title>Genome sequence of Cronobacter sakazakii BAA-894 and comparative genomic hybridization analysis with other Cronobacter species.</title>
        <authorList>
            <person name="Kucerova E."/>
            <person name="Clifton S.W."/>
            <person name="Xia X.Q."/>
            <person name="Long F."/>
            <person name="Porwollik S."/>
            <person name="Fulton L."/>
            <person name="Fronick C."/>
            <person name="Minx P."/>
            <person name="Kyung K."/>
            <person name="Warren W."/>
            <person name="Fulton R."/>
            <person name="Feng D."/>
            <person name="Wollam A."/>
            <person name="Shah N."/>
            <person name="Bhonagiri V."/>
            <person name="Nash W.E."/>
            <person name="Hallsworth-Pepin K."/>
            <person name="Wilson R.K."/>
            <person name="McClelland M."/>
            <person name="Forsythe S.J."/>
        </authorList>
    </citation>
    <scope>NUCLEOTIDE SEQUENCE [LARGE SCALE GENOMIC DNA]</scope>
    <source>
        <strain>ATCC BAA-894</strain>
    </source>
</reference>